<protein>
    <recommendedName>
        <fullName>Growth-regulating factor 3</fullName>
        <shortName>AtGRF3</shortName>
    </recommendedName>
    <alternativeName>
        <fullName>Transcription activator GRF3</fullName>
    </alternativeName>
</protein>
<proteinExistence type="evidence at protein level"/>
<gene>
    <name type="primary">GRF3</name>
    <name type="ordered locus">At2g36400</name>
    <name type="ORF">F1O11.3</name>
</gene>
<comment type="function">
    <text evidence="4 8">Transcription activator that plays a role in the regulation of cell expansion in leaf and cotyledons tissues. Component of a network formed by miR396, the GRFs and their interacting factors (GIFs) acting in the regulation of meristem function, at least partially through the control of cell proliferation. microRNA396-GRF1/GRF3 regulatory module acts as a developmental regulator in the reprogramming of root cells during cyst nematode infection, leading to the formation of the syncytium.</text>
</comment>
<comment type="interaction">
    <interactant intactId="EBI-3134219">
        <id>Q9SJR5</id>
    </interactant>
    <interactant intactId="EBI-15194507">
        <id>Q93VH6</id>
        <label>GIF3</label>
    </interactant>
    <organismsDiffer>false</organismsDiffer>
    <experiments>3</experiments>
</comment>
<comment type="subcellular location">
    <subcellularLocation>
        <location evidence="2">Nucleus</location>
    </subcellularLocation>
</comment>
<comment type="tissue specificity">
    <text evidence="4">Strongly expressed in actively growing and developing tissues, such as roots, upper stems, and shoot tips containing the shoot apical meristem (SAM) and flower buds. Also expressed in mature flowers, but weakly expressed in mature stems and leaves.</text>
</comment>
<comment type="developmental stage">
    <text evidence="7">Expressed during the early stages of leaf development and expression decreases with the maturation of the leaf.</text>
</comment>
<comment type="induction">
    <text evidence="5 6 7 8">microRNA 396 (miR396a or miR396b) negatively regulates growth-regulating factors (GRF1-4 and GRF7-9). Up-regulated in response to cyst nematode infection.</text>
</comment>
<comment type="domain">
    <text>The QLQ domain and WRC domain may be involved in protein-protein interaction and DNA-binding, respectively.</text>
</comment>
<comment type="similarity">
    <text evidence="9">Belongs to the GRF family.</text>
</comment>
<dbReference type="EMBL" id="AY102636">
    <property type="protein sequence ID" value="AAM52878.1"/>
    <property type="molecule type" value="mRNA"/>
</dbReference>
<dbReference type="EMBL" id="AC006919">
    <property type="protein sequence ID" value="AAD24624.1"/>
    <property type="molecule type" value="Genomic_DNA"/>
</dbReference>
<dbReference type="EMBL" id="CP002685">
    <property type="protein sequence ID" value="AEC09248.1"/>
    <property type="molecule type" value="Genomic_DNA"/>
</dbReference>
<dbReference type="EMBL" id="AK117417">
    <property type="protein sequence ID" value="BAC42083.1"/>
    <property type="molecule type" value="mRNA"/>
</dbReference>
<dbReference type="EMBL" id="BT026472">
    <property type="protein sequence ID" value="ABH04579.1"/>
    <property type="molecule type" value="mRNA"/>
</dbReference>
<dbReference type="PIR" id="C84780">
    <property type="entry name" value="C84780"/>
</dbReference>
<dbReference type="RefSeq" id="NP_181181.1">
    <property type="nucleotide sequence ID" value="NM_129197.4"/>
</dbReference>
<dbReference type="BioGRID" id="3557">
    <property type="interactions" value="9"/>
</dbReference>
<dbReference type="FunCoup" id="Q9SJR5">
    <property type="interactions" value="295"/>
</dbReference>
<dbReference type="IntAct" id="Q9SJR5">
    <property type="interactions" value="11"/>
</dbReference>
<dbReference type="STRING" id="3702.Q9SJR5"/>
<dbReference type="iPTMnet" id="Q9SJR5"/>
<dbReference type="PaxDb" id="3702-AT2G36400.1"/>
<dbReference type="ProteomicsDB" id="247035"/>
<dbReference type="EnsemblPlants" id="AT2G36400.1">
    <property type="protein sequence ID" value="AT2G36400.1"/>
    <property type="gene ID" value="AT2G36400"/>
</dbReference>
<dbReference type="GeneID" id="818213"/>
<dbReference type="Gramene" id="AT2G36400.1">
    <property type="protein sequence ID" value="AT2G36400.1"/>
    <property type="gene ID" value="AT2G36400"/>
</dbReference>
<dbReference type="KEGG" id="ath:AT2G36400"/>
<dbReference type="Araport" id="AT2G36400"/>
<dbReference type="TAIR" id="AT2G36400">
    <property type="gene designation" value="GRF3"/>
</dbReference>
<dbReference type="eggNOG" id="ENOG502QTJ4">
    <property type="taxonomic scope" value="Eukaryota"/>
</dbReference>
<dbReference type="HOGENOM" id="CLU_037902_1_0_1"/>
<dbReference type="InParanoid" id="Q9SJR5"/>
<dbReference type="OMA" id="PGPRNEN"/>
<dbReference type="OrthoDB" id="1927209at2759"/>
<dbReference type="PhylomeDB" id="Q9SJR5"/>
<dbReference type="PRO" id="PR:Q9SJR5"/>
<dbReference type="Proteomes" id="UP000006548">
    <property type="component" value="Chromosome 2"/>
</dbReference>
<dbReference type="ExpressionAtlas" id="Q9SJR5">
    <property type="expression patterns" value="baseline and differential"/>
</dbReference>
<dbReference type="GO" id="GO:0005634">
    <property type="term" value="C:nucleus"/>
    <property type="evidence" value="ECO:0000314"/>
    <property type="project" value="TAIR"/>
</dbReference>
<dbReference type="GO" id="GO:0005524">
    <property type="term" value="F:ATP binding"/>
    <property type="evidence" value="ECO:0007669"/>
    <property type="project" value="InterPro"/>
</dbReference>
<dbReference type="GO" id="GO:0000976">
    <property type="term" value="F:transcription cis-regulatory region binding"/>
    <property type="evidence" value="ECO:0000353"/>
    <property type="project" value="TAIR"/>
</dbReference>
<dbReference type="GO" id="GO:0006351">
    <property type="term" value="P:DNA-templated transcription"/>
    <property type="evidence" value="ECO:0007669"/>
    <property type="project" value="InterPro"/>
</dbReference>
<dbReference type="GO" id="GO:0008285">
    <property type="term" value="P:negative regulation of cell population proliferation"/>
    <property type="evidence" value="ECO:0000315"/>
    <property type="project" value="TAIR"/>
</dbReference>
<dbReference type="GO" id="GO:0006355">
    <property type="term" value="P:regulation of DNA-templated transcription"/>
    <property type="evidence" value="ECO:0007669"/>
    <property type="project" value="InterPro"/>
</dbReference>
<dbReference type="GO" id="GO:0061062">
    <property type="term" value="P:regulation of nematode larval development"/>
    <property type="evidence" value="ECO:0000315"/>
    <property type="project" value="TAIR"/>
</dbReference>
<dbReference type="GO" id="GO:0009409">
    <property type="term" value="P:response to cold"/>
    <property type="evidence" value="ECO:0000270"/>
    <property type="project" value="TAIR"/>
</dbReference>
<dbReference type="GO" id="GO:0009739">
    <property type="term" value="P:response to gibberellin"/>
    <property type="evidence" value="ECO:0000270"/>
    <property type="project" value="TAIR"/>
</dbReference>
<dbReference type="GO" id="GO:0009624">
    <property type="term" value="P:response to nematode"/>
    <property type="evidence" value="ECO:0000270"/>
    <property type="project" value="TAIR"/>
</dbReference>
<dbReference type="GO" id="GO:0048364">
    <property type="term" value="P:root development"/>
    <property type="evidence" value="ECO:0000315"/>
    <property type="project" value="TAIR"/>
</dbReference>
<dbReference type="InterPro" id="IPR014978">
    <property type="entry name" value="Gln-Leu-Gln_QLQ"/>
</dbReference>
<dbReference type="InterPro" id="IPR031137">
    <property type="entry name" value="GRF"/>
</dbReference>
<dbReference type="InterPro" id="IPR014977">
    <property type="entry name" value="WRC_dom"/>
</dbReference>
<dbReference type="PANTHER" id="PTHR31602:SF63">
    <property type="entry name" value="GROWTH-REGULATING FACTOR 3"/>
    <property type="match status" value="1"/>
</dbReference>
<dbReference type="PANTHER" id="PTHR31602">
    <property type="entry name" value="GROWTH-REGULATING FACTOR 5"/>
    <property type="match status" value="1"/>
</dbReference>
<dbReference type="Pfam" id="PF08880">
    <property type="entry name" value="QLQ"/>
    <property type="match status" value="1"/>
</dbReference>
<dbReference type="Pfam" id="PF08879">
    <property type="entry name" value="WRC"/>
    <property type="match status" value="1"/>
</dbReference>
<dbReference type="SMART" id="SM00951">
    <property type="entry name" value="QLQ"/>
    <property type="match status" value="1"/>
</dbReference>
<dbReference type="PROSITE" id="PS51666">
    <property type="entry name" value="QLQ"/>
    <property type="match status" value="1"/>
</dbReference>
<dbReference type="PROSITE" id="PS51667">
    <property type="entry name" value="WRC"/>
    <property type="match status" value="1"/>
</dbReference>
<sequence length="398" mass="43707">MDLQLKQWRSQQQQQHQTESEEQPSAAKIPKHVFDQIHSHTATSTALPLFTPEPTSSKLSSLSPDSSSRFPKMGSFFSWAQWQELELQALIYRYMLAGAAVPQELLLPIKKSLLHLSPSYFLHHPLQHLPHYQPAWYLGRAAMDPEPGRCRRTDGKKWRCSRDVFAGHKYCERHMHRGRNRSRKPVETPTTVNATATSMASSVAAAATTTTATTTSTFAFGGGGGSEEVVGQGGSFFFSGSSNSSSELLHLSQSCSEMKQESNNMNNKRPYESHIGFSNNRSDGGHILRPFFDDWPRSSLQEADNSSSPMSSATCLSISMPGNSSSDVSLKLSTGNEEGARSNNNGRDQQNMSWWSGGGSNHHHHNMGGPLAEALRSSSSSSPTSVLHQLGVSTQAFH</sequence>
<keyword id="KW-0010">Activator</keyword>
<keyword id="KW-0539">Nucleus</keyword>
<keyword id="KW-1185">Reference proteome</keyword>
<keyword id="KW-0804">Transcription</keyword>
<keyword id="KW-0805">Transcription regulation</keyword>
<organism>
    <name type="scientific">Arabidopsis thaliana</name>
    <name type="common">Mouse-ear cress</name>
    <dbReference type="NCBI Taxonomy" id="3702"/>
    <lineage>
        <taxon>Eukaryota</taxon>
        <taxon>Viridiplantae</taxon>
        <taxon>Streptophyta</taxon>
        <taxon>Embryophyta</taxon>
        <taxon>Tracheophyta</taxon>
        <taxon>Spermatophyta</taxon>
        <taxon>Magnoliopsida</taxon>
        <taxon>eudicotyledons</taxon>
        <taxon>Gunneridae</taxon>
        <taxon>Pentapetalae</taxon>
        <taxon>rosids</taxon>
        <taxon>malvids</taxon>
        <taxon>Brassicales</taxon>
        <taxon>Brassicaceae</taxon>
        <taxon>Camelineae</taxon>
        <taxon>Arabidopsis</taxon>
    </lineage>
</organism>
<reference key="1">
    <citation type="journal article" date="2003" name="Plant J.">
        <title>The AtGRF family of putative transcription factors is involved in leaf and cotyledon growth in Arabidopsis.</title>
        <authorList>
            <person name="Kim J.H."/>
            <person name="Choi D."/>
            <person name="Kende H."/>
        </authorList>
    </citation>
    <scope>NUCLEOTIDE SEQUENCE [MRNA]</scope>
    <scope>GENE FAMILY</scope>
    <scope>NOMENCLATURE</scope>
    <scope>FUNCTION</scope>
    <scope>TISSUE SPECIFICITY</scope>
</reference>
<reference key="2">
    <citation type="journal article" date="1999" name="Nature">
        <title>Sequence and analysis of chromosome 2 of the plant Arabidopsis thaliana.</title>
        <authorList>
            <person name="Lin X."/>
            <person name="Kaul S."/>
            <person name="Rounsley S.D."/>
            <person name="Shea T.P."/>
            <person name="Benito M.-I."/>
            <person name="Town C.D."/>
            <person name="Fujii C.Y."/>
            <person name="Mason T.M."/>
            <person name="Bowman C.L."/>
            <person name="Barnstead M.E."/>
            <person name="Feldblyum T.V."/>
            <person name="Buell C.R."/>
            <person name="Ketchum K.A."/>
            <person name="Lee J.J."/>
            <person name="Ronning C.M."/>
            <person name="Koo H.L."/>
            <person name="Moffat K.S."/>
            <person name="Cronin L.A."/>
            <person name="Shen M."/>
            <person name="Pai G."/>
            <person name="Van Aken S."/>
            <person name="Umayam L."/>
            <person name="Tallon L.J."/>
            <person name="Gill J.E."/>
            <person name="Adams M.D."/>
            <person name="Carrera A.J."/>
            <person name="Creasy T.H."/>
            <person name="Goodman H.M."/>
            <person name="Somerville C.R."/>
            <person name="Copenhaver G.P."/>
            <person name="Preuss D."/>
            <person name="Nierman W.C."/>
            <person name="White O."/>
            <person name="Eisen J.A."/>
            <person name="Salzberg S.L."/>
            <person name="Fraser C.M."/>
            <person name="Venter J.C."/>
        </authorList>
    </citation>
    <scope>NUCLEOTIDE SEQUENCE [LARGE SCALE GENOMIC DNA]</scope>
    <source>
        <strain>cv. Columbia</strain>
    </source>
</reference>
<reference key="3">
    <citation type="journal article" date="2017" name="Plant J.">
        <title>Araport11: a complete reannotation of the Arabidopsis thaliana reference genome.</title>
        <authorList>
            <person name="Cheng C.Y."/>
            <person name="Krishnakumar V."/>
            <person name="Chan A.P."/>
            <person name="Thibaud-Nissen F."/>
            <person name="Schobel S."/>
            <person name="Town C.D."/>
        </authorList>
    </citation>
    <scope>GENOME REANNOTATION</scope>
    <source>
        <strain>cv. Columbia</strain>
    </source>
</reference>
<reference key="4">
    <citation type="journal article" date="2002" name="Science">
        <title>Functional annotation of a full-length Arabidopsis cDNA collection.</title>
        <authorList>
            <person name="Seki M."/>
            <person name="Narusaka M."/>
            <person name="Kamiya A."/>
            <person name="Ishida J."/>
            <person name="Satou M."/>
            <person name="Sakurai T."/>
            <person name="Nakajima M."/>
            <person name="Enju A."/>
            <person name="Akiyama K."/>
            <person name="Oono Y."/>
            <person name="Muramatsu M."/>
            <person name="Hayashizaki Y."/>
            <person name="Kawai J."/>
            <person name="Carninci P."/>
            <person name="Itoh M."/>
            <person name="Ishii Y."/>
            <person name="Arakawa T."/>
            <person name="Shibata K."/>
            <person name="Shinagawa A."/>
            <person name="Shinozaki K."/>
        </authorList>
    </citation>
    <scope>NUCLEOTIDE SEQUENCE [LARGE SCALE MRNA]</scope>
    <source>
        <strain>cv. Columbia</strain>
    </source>
</reference>
<reference key="5">
    <citation type="submission" date="2006-08" db="EMBL/GenBank/DDBJ databases">
        <title>Arabidopsis ORF Clones.</title>
        <authorList>
            <person name="Quinitio C."/>
            <person name="Chen H."/>
            <person name="Kim C.J."/>
            <person name="Shinn P."/>
            <person name="Ecker J.R."/>
        </authorList>
    </citation>
    <scope>NUCLEOTIDE SEQUENCE [LARGE SCALE MRNA]</scope>
    <source>
        <strain>cv. Columbia</strain>
    </source>
</reference>
<reference key="6">
    <citation type="journal article" date="2004" name="Mol. Cell">
        <title>Computational identification of plant microRNAs and their targets, including a stress-induced miRNA.</title>
        <authorList>
            <person name="Jones-Rhoades M.W."/>
            <person name="Bartel D.P."/>
        </authorList>
    </citation>
    <scope>INDUCTION</scope>
</reference>
<reference key="7">
    <citation type="journal article" date="2009" name="Physiol. Plantarum">
        <title>Ectopic expression of miR396 suppresses GRF target gene expression and alters leaf growth in Arabidopsis.</title>
        <authorList>
            <person name="Liu D."/>
            <person name="Song Y."/>
            <person name="Chen Z."/>
            <person name="Yu D."/>
        </authorList>
    </citation>
    <scope>INDUCTION</scope>
</reference>
<reference key="8">
    <citation type="journal article" date="2010" name="Development">
        <title>Control of cell proliferation in Arabidopsis thaliana by microRNA miR396.</title>
        <authorList>
            <person name="Rodriguez R.E."/>
            <person name="Mecchia M.A."/>
            <person name="Debernardi J.M."/>
            <person name="Schommer C."/>
            <person name="Weigel D."/>
            <person name="Palatnik J.F."/>
        </authorList>
    </citation>
    <scope>DEVELOPMENTAL STAGE</scope>
    <scope>INDUCTION</scope>
</reference>
<reference key="9">
    <citation type="journal article" date="2012" name="Plant Physiol.">
        <title>The Arabidopsis microRNA396-GRF1/GRF3 regulatory module acts as a developmental regulator in the reprogramming of root cells during cyst nematode infection.</title>
        <authorList>
            <person name="Hewezi T."/>
            <person name="Maier T.R."/>
            <person name="Nettleton D."/>
            <person name="Baum T.J."/>
        </authorList>
    </citation>
    <scope>FUNCTION</scope>
    <scope>INDUCTION</scope>
</reference>
<name>GRF3_ARATH</name>
<accession>Q9SJR5</accession>
<accession>Q8GYS6</accession>
<evidence type="ECO:0000255" key="1">
    <source>
        <dbReference type="PROSITE-ProRule" id="PRU01001"/>
    </source>
</evidence>
<evidence type="ECO:0000255" key="2">
    <source>
        <dbReference type="PROSITE-ProRule" id="PRU01002"/>
    </source>
</evidence>
<evidence type="ECO:0000256" key="3">
    <source>
        <dbReference type="SAM" id="MobiDB-lite"/>
    </source>
</evidence>
<evidence type="ECO:0000269" key="4">
    <source>
    </source>
</evidence>
<evidence type="ECO:0000269" key="5">
    <source>
    </source>
</evidence>
<evidence type="ECO:0000269" key="6">
    <source>
    </source>
</evidence>
<evidence type="ECO:0000269" key="7">
    <source>
    </source>
</evidence>
<evidence type="ECO:0000269" key="8">
    <source>
    </source>
</evidence>
<evidence type="ECO:0000305" key="9"/>
<feature type="chain" id="PRO_0000419294" description="Growth-regulating factor 3">
    <location>
        <begin position="1"/>
        <end position="398"/>
    </location>
</feature>
<feature type="domain" description="QLQ" evidence="1">
    <location>
        <begin position="76"/>
        <end position="111"/>
    </location>
</feature>
<feature type="domain" description="WRC" evidence="2">
    <location>
        <begin position="144"/>
        <end position="188"/>
    </location>
</feature>
<feature type="region of interest" description="Disordered" evidence="3">
    <location>
        <begin position="1"/>
        <end position="32"/>
    </location>
</feature>
<feature type="region of interest" description="Disordered" evidence="3">
    <location>
        <begin position="299"/>
        <end position="398"/>
    </location>
</feature>
<feature type="short sequence motif" description="Bipartite nuclear localization signal" evidence="2">
    <location>
        <begin position="149"/>
        <end position="159"/>
    </location>
</feature>
<feature type="short sequence motif" description="Bipartite nuclear localization signal" evidence="2">
    <location>
        <begin position="177"/>
        <end position="184"/>
    </location>
</feature>
<feature type="compositionally biased region" description="Low complexity" evidence="3">
    <location>
        <begin position="1"/>
        <end position="17"/>
    </location>
</feature>
<feature type="compositionally biased region" description="Polar residues" evidence="3">
    <location>
        <begin position="299"/>
        <end position="350"/>
    </location>
</feature>
<feature type="compositionally biased region" description="Polar residues" evidence="3">
    <location>
        <begin position="383"/>
        <end position="398"/>
    </location>
</feature>
<feature type="sequence conflict" description="In Ref. 4; BAC42083." evidence="9" ref="4">
    <original>Q</original>
    <variation>R</variation>
    <location>
        <position position="13"/>
    </location>
</feature>